<feature type="chain" id="PRO_0000077543" description="Divinyl chlorophyll a/b light-harvesting protein PcbF">
    <location>
        <begin position="1"/>
        <end position="354"/>
    </location>
</feature>
<feature type="transmembrane region" description="Helical" evidence="3">
    <location>
        <begin position="27"/>
        <end position="47"/>
    </location>
</feature>
<feature type="transmembrane region" description="Helical" evidence="3">
    <location>
        <begin position="88"/>
        <end position="108"/>
    </location>
</feature>
<feature type="transmembrane region" description="Helical" evidence="3">
    <location>
        <begin position="140"/>
        <end position="160"/>
    </location>
</feature>
<feature type="transmembrane region" description="Helical" evidence="3">
    <location>
        <begin position="201"/>
        <end position="221"/>
    </location>
</feature>
<feature type="transmembrane region" description="Helical" evidence="3">
    <location>
        <begin position="248"/>
        <end position="268"/>
    </location>
</feature>
<feature type="transmembrane region" description="Helical" evidence="3">
    <location>
        <begin position="315"/>
        <end position="335"/>
    </location>
</feature>
<gene>
    <name type="primary">pcbF</name>
    <name type="ordered locus">Pro_1288</name>
</gene>
<protein>
    <recommendedName>
        <fullName>Divinyl chlorophyll a/b light-harvesting protein PcbF</fullName>
    </recommendedName>
</protein>
<name>PCBF_PROMA</name>
<sequence>MQTYGNPDVTYDYWAGNASVTNRSGRFIASHAAHTGMIAFGAGSNTLFELSRFDSSLPMGDQGFVFLPHLASVGIGFDEAGVWTGAGVVTLAILHLILSMVYGAGGLLHAIYFPDDMQKSNVPQARKFKLEWDNPDNQTFILGHHLILFGLACAWFVEWARIHGIYDPAIGAVRQVNYNLDLSMIWERQVNFLNIDSLEDVMGGHAFLAFAEITGGCFHAIAGSTKWEDKRLGEYDRLKGAGLLSAEAILSFSLAGIGWMAIVAAFWCSQNTTVYPIEFYGEPLNRAFVIAPAFVDSIDYSNGIAPLGHSGRCYTANFHYIAGFFAFQGHLWHALRAMGYNFKDLRAKLNPSAA</sequence>
<organism>
    <name type="scientific">Prochlorococcus marinus (strain SARG / CCMP1375 / SS120)</name>
    <dbReference type="NCBI Taxonomy" id="167539"/>
    <lineage>
        <taxon>Bacteria</taxon>
        <taxon>Bacillati</taxon>
        <taxon>Cyanobacteriota</taxon>
        <taxon>Cyanophyceae</taxon>
        <taxon>Synechococcales</taxon>
        <taxon>Prochlorococcaceae</taxon>
        <taxon>Prochlorococcus</taxon>
    </lineage>
</organism>
<dbReference type="EMBL" id="AF198530">
    <property type="protein sequence ID" value="AAF61305.1"/>
    <property type="molecule type" value="Genomic_DNA"/>
</dbReference>
<dbReference type="EMBL" id="AE017126">
    <property type="protein sequence ID" value="AAQ00332.1"/>
    <property type="molecule type" value="Genomic_DNA"/>
</dbReference>
<dbReference type="RefSeq" id="NP_875679.1">
    <property type="nucleotide sequence ID" value="NC_005042.1"/>
</dbReference>
<dbReference type="RefSeq" id="WP_011125439.1">
    <property type="nucleotide sequence ID" value="NC_005042.1"/>
</dbReference>
<dbReference type="SMR" id="Q9L8M1"/>
<dbReference type="STRING" id="167539.Pro_1288"/>
<dbReference type="EnsemblBacteria" id="AAQ00332">
    <property type="protein sequence ID" value="AAQ00332"/>
    <property type="gene ID" value="Pro_1288"/>
</dbReference>
<dbReference type="KEGG" id="pma:Pro_1288"/>
<dbReference type="PATRIC" id="fig|167539.5.peg.1350"/>
<dbReference type="eggNOG" id="ENOG5030QND">
    <property type="taxonomic scope" value="Bacteria"/>
</dbReference>
<dbReference type="HOGENOM" id="CLU_028310_0_0_3"/>
<dbReference type="OrthoDB" id="537372at2"/>
<dbReference type="Proteomes" id="UP000001420">
    <property type="component" value="Chromosome"/>
</dbReference>
<dbReference type="GO" id="GO:0009522">
    <property type="term" value="C:photosystem I"/>
    <property type="evidence" value="ECO:0007669"/>
    <property type="project" value="UniProtKB-KW"/>
</dbReference>
<dbReference type="GO" id="GO:0009523">
    <property type="term" value="C:photosystem II"/>
    <property type="evidence" value="ECO:0007669"/>
    <property type="project" value="UniProtKB-KW"/>
</dbReference>
<dbReference type="GO" id="GO:0031676">
    <property type="term" value="C:plasma membrane-derived thylakoid membrane"/>
    <property type="evidence" value="ECO:0007669"/>
    <property type="project" value="UniProtKB-SubCell"/>
</dbReference>
<dbReference type="GO" id="GO:0016168">
    <property type="term" value="F:chlorophyll binding"/>
    <property type="evidence" value="ECO:0007669"/>
    <property type="project" value="UniProtKB-KW"/>
</dbReference>
<dbReference type="GO" id="GO:0009767">
    <property type="term" value="P:photosynthetic electron transport chain"/>
    <property type="evidence" value="ECO:0007669"/>
    <property type="project" value="InterPro"/>
</dbReference>
<dbReference type="InterPro" id="IPR000932">
    <property type="entry name" value="PS_antenna-like"/>
</dbReference>
<dbReference type="InterPro" id="IPR036001">
    <property type="entry name" value="PS_II_antenna-like_sf"/>
</dbReference>
<dbReference type="NCBIfam" id="TIGR03041">
    <property type="entry name" value="PS_antenn_a_b"/>
    <property type="match status" value="1"/>
</dbReference>
<dbReference type="Pfam" id="PF00421">
    <property type="entry name" value="PSII"/>
    <property type="match status" value="1"/>
</dbReference>
<dbReference type="SUPFAM" id="SSF161077">
    <property type="entry name" value="Photosystem II antenna protein-like"/>
    <property type="match status" value="1"/>
</dbReference>
<reference key="1">
    <citation type="journal article" date="2000" name="Proc. Natl. Acad. Sci. U.S.A.">
        <title>Multiplication of antenna genes as a major adaptation to low light in a marine prokaryote.</title>
        <authorList>
            <person name="Garczarek L."/>
            <person name="Hess W.R."/>
            <person name="Holtzendorff J."/>
            <person name="van der Staay G.W.M."/>
            <person name="Partensky F."/>
        </authorList>
    </citation>
    <scope>NUCLEOTIDE SEQUENCE [GENOMIC DNA]</scope>
    <scope>FUNCTION</scope>
    <source>
        <strain>SARG / CCMP1375 / SS120</strain>
    </source>
</reference>
<reference key="2">
    <citation type="journal article" date="2003" name="Proc. Natl. Acad. Sci. U.S.A.">
        <title>Genome sequence of the cyanobacterium Prochlorococcus marinus SS120, a nearly minimal oxyphototrophic genome.</title>
        <authorList>
            <person name="Dufresne A."/>
            <person name="Salanoubat M."/>
            <person name="Partensky F."/>
            <person name="Artiguenave F."/>
            <person name="Axmann I.M."/>
            <person name="Barbe V."/>
            <person name="Duprat S."/>
            <person name="Galperin M.Y."/>
            <person name="Koonin E.V."/>
            <person name="Le Gall F."/>
            <person name="Makarova K.S."/>
            <person name="Ostrowski M."/>
            <person name="Oztas S."/>
            <person name="Robert C."/>
            <person name="Rogozin I.B."/>
            <person name="Scanlan D.J."/>
            <person name="Tandeau de Marsac N."/>
            <person name="Weissenbach J."/>
            <person name="Wincker P."/>
            <person name="Wolf Y.I."/>
            <person name="Hess W.R."/>
        </authorList>
    </citation>
    <scope>NUCLEOTIDE SEQUENCE [LARGE SCALE GENOMIC DNA]</scope>
    <source>
        <strain>SARG / CCMP1375 / SS120</strain>
    </source>
</reference>
<reference key="3">
    <citation type="journal article" date="1997" name="Photosyn. Res.">
        <title>The divinyl-chlorophyll a/b-protein complexes of two strains of the oxyphototrophic marine prokaryote Prochlorococcus -- characterization and response to changes in growth irradiance.</title>
        <authorList>
            <person name="Partensky F."/>
            <person name="La Roche J."/>
            <person name="Wyman K."/>
            <person name="Falkowski P.G."/>
        </authorList>
    </citation>
    <scope>FUNCTION</scope>
    <scope>SUBCELLULAR LOCATION</scope>
    <source>
        <strain>SARG / CCMP1375 / SS120</strain>
    </source>
</reference>
<reference key="4">
    <citation type="journal article" date="2001" name="Plant Mol. Biol.">
        <title>Expression and phylogeny of the multiple antenna genes of the low-light-adapted strain Prochlorococcus marinus SS120 (Oxyphotobacteria).</title>
        <authorList>
            <person name="Garczarek L."/>
            <person name="van der Staay G.W.M."/>
            <person name="Hess W.R."/>
            <person name="Le Gall F."/>
            <person name="Partensky F."/>
        </authorList>
    </citation>
    <scope>INDUCTION</scope>
    <source>
        <strain>SARG / CCMP1375 / SS120</strain>
    </source>
</reference>
<reference key="5">
    <citation type="journal article" date="2003" name="Nature">
        <title>Low-light-adapted Prochlorococcus species possess specific antennae for each photosystem.</title>
        <authorList>
            <person name="Bibby T.S."/>
            <person name="Mary I."/>
            <person name="Nield J."/>
            <person name="Partensky F."/>
            <person name="Barber J."/>
        </authorList>
    </citation>
    <scope>REPRESSION UNDER IRON-STARVATION</scope>
    <source>
        <strain>SARG / CCMP1375 / SS120</strain>
    </source>
</reference>
<evidence type="ECO:0000250" key="1"/>
<evidence type="ECO:0000250" key="2">
    <source>
        <dbReference type="UniProtKB" id="Q6Q972"/>
    </source>
</evidence>
<evidence type="ECO:0000255" key="3"/>
<evidence type="ECO:0000269" key="4">
    <source>
    </source>
</evidence>
<evidence type="ECO:0000269" key="5">
    <source>
    </source>
</evidence>
<evidence type="ECO:0000269" key="6">
    <source ref="3"/>
</evidence>
<evidence type="ECO:0000303" key="7">
    <source>
    </source>
</evidence>
<evidence type="ECO:0000303" key="8">
    <source>
    </source>
</evidence>
<evidence type="ECO:0000303" key="9">
    <source>
    </source>
</evidence>
<evidence type="ECO:0000303" key="10">
    <source ref="3"/>
</evidence>
<evidence type="ECO:0000305" key="11"/>
<accession>Q9L8M1</accession>
<accession>Q7BWH8</accession>
<proteinExistence type="evidence at transcript level"/>
<keyword id="KW-0148">Chlorophyll</keyword>
<keyword id="KW-0157">Chromophore</keyword>
<keyword id="KW-0472">Membrane</keyword>
<keyword id="KW-0602">Photosynthesis</keyword>
<keyword id="KW-0603">Photosystem I</keyword>
<keyword id="KW-0604">Photosystem II</keyword>
<keyword id="KW-1185">Reference proteome</keyword>
<keyword id="KW-0793">Thylakoid</keyword>
<keyword id="KW-0812">Transmembrane</keyword>
<keyword id="KW-1133">Transmembrane helix</keyword>
<comment type="function">
    <text evidence="2 7 10">The antenna complex functions as a light receptor, it captures and delivers excitation energy to photosystems II and I. The Prochlorales pcb genes are not related to higher plant LHCs.</text>
</comment>
<comment type="cofactor">
    <cofactor evidence="10">
        <name>divinyl chlorophyll a</name>
        <dbReference type="ChEBI" id="CHEBI:73095"/>
    </cofactor>
</comment>
<comment type="cofactor">
    <cofactor evidence="10">
        <name>divinyl chlorophyll b</name>
        <dbReference type="ChEBI" id="CHEBI:73096"/>
    </cofactor>
</comment>
<comment type="subunit">
    <text>The antenna complex consists of divinyl chlorophylls (a and b) and divinyl chlorophyll a/b binding proteins and binds more divinyl chlorophyll b than does the antenna complex from high-light-adapted Prochlorococcus.</text>
</comment>
<comment type="subcellular location">
    <subcellularLocation>
        <location evidence="6">Cellular thylakoid membrane</location>
        <topology evidence="1">Multi-pass membrane protein</topology>
    </subcellularLocation>
</comment>
<comment type="induction">
    <text evidence="4 5">This transcript is too unstable to be able to determine its expression levels. The whole antenna complex is most highly expressed under low light; as the light levels increase antenna complex levels decrease. Thus at least in this strain the amount of antenna complex is controlled mostly at a post-transcriptional level. Transcription decreases upon iron starvation.</text>
</comment>
<comment type="miscellaneous">
    <text evidence="8 9">This low-light-adapted strain contains 8 pcb genes.</text>
</comment>
<comment type="similarity">
    <text evidence="11">Belongs to the PsbB/PsbC family. IsiA/Pcb subfamily.</text>
</comment>